<organism>
    <name type="scientific">Saccharomyces cerevisiae (strain ATCC 204508 / S288c)</name>
    <name type="common">Baker's yeast</name>
    <dbReference type="NCBI Taxonomy" id="559292"/>
    <lineage>
        <taxon>Eukaryota</taxon>
        <taxon>Fungi</taxon>
        <taxon>Dikarya</taxon>
        <taxon>Ascomycota</taxon>
        <taxon>Saccharomycotina</taxon>
        <taxon>Saccharomycetes</taxon>
        <taxon>Saccharomycetales</taxon>
        <taxon>Saccharomycetaceae</taxon>
        <taxon>Saccharomyces</taxon>
    </lineage>
</organism>
<gene>
    <name type="primary">GPM1</name>
    <name type="synonym">GPM</name>
    <name type="ordered locus">YKL152C</name>
    <name type="ORF">YKL607</name>
</gene>
<comment type="function">
    <text evidence="4 11">Interconversion of 3- and 2-phosphoglycerate with 2,3-bisphosphoglycerate as the primer of the reaction. Can also catalyze the reaction of EC 5.4.2.4 (synthase), but with a reduced activity.</text>
</comment>
<comment type="catalytic activity">
    <reaction evidence="4">
        <text>(2R)-2-phosphoglycerate = (2R)-3-phosphoglycerate</text>
        <dbReference type="Rhea" id="RHEA:15901"/>
        <dbReference type="ChEBI" id="CHEBI:58272"/>
        <dbReference type="ChEBI" id="CHEBI:58289"/>
        <dbReference type="EC" id="5.4.2.11"/>
    </reaction>
</comment>
<comment type="activity regulation">
    <text evidence="2">Inhibited by inositol hexakisphosphate and benzene tri-, tetra- and hexacarboxylates.</text>
</comment>
<comment type="biophysicochemical properties">
    <kinetics>
        <KM evidence="4 11">740 uM for 3-phosphoglycerate</KM>
        <KM evidence="4 11">8.1 uM for 2,3-bisphosphoglycerate (for mutase reaction)</KM>
        <KM evidence="4 11">2.4 uM for 2,3-bisphosphoglycerate (for phosphatase reaction)</KM>
        <text evidence="4">kcat is 490 sec(-1) for the mutase reaction, 0.0074 sec(-1) for the synthase reaction and 0.0087 sec(-1) for the phosphatase reaction with 3-phosphoglycerate as substrate.</text>
    </kinetics>
</comment>
<comment type="pathway">
    <text>Carbohydrate degradation; glycolysis; pyruvate from D-glyceraldehyde 3-phosphate: step 3/5.</text>
</comment>
<comment type="subunit">
    <text evidence="1 2 3 10 11 12">Homotetramer: dimer of dimers.</text>
</comment>
<comment type="subcellular location">
    <subcellularLocation>
        <location evidence="5">Cytoplasm</location>
    </subcellularLocation>
    <subcellularLocation>
        <location evidence="7 8">Mitochondrion outer membrane</location>
        <topology evidence="7 8">Peripheral membrane protein</topology>
        <orientation evidence="7 8">Cytoplasmic side</orientation>
    </subcellularLocation>
    <subcellularLocation>
        <location evidence="9">Mitochondrion intermembrane space</location>
    </subcellularLocation>
</comment>
<comment type="miscellaneous">
    <text evidence="6">Present with 172000 molecules/cell in log phase SD medium.</text>
</comment>
<comment type="similarity">
    <text evidence="14">Belongs to the phosphoglycerate mutase family. BPG-dependent PGAM subfamily.</text>
</comment>
<proteinExistence type="evidence at protein level"/>
<sequence length="247" mass="27609">MPKLVLVRHGQSEWNEKNLFTGWVDVKLSAKGQQEAARAGELLKEKKVYPDVLYTSKLSRAIQTANIALEKADRLWIPVNRSWRLNERHYGDLQGKDKAETLKKFGEEKFNTYRRSFDVPPPPIDASSPFSQKGDERYKYVDPNVLPETESLALVIDRLLPYWQDVIAKDLLSGKTVMIAAHGNSLRGLVKHLEGISDADIAKLNIPTGIPLVFELDENLKPSKPSYYLDPEAAAAGAAAVANQGKK</sequence>
<name>PMG1_YEAST</name>
<dbReference type="EC" id="5.4.2.11" evidence="4"/>
<dbReference type="EMBL" id="X06408">
    <property type="protein sequence ID" value="CAA29698.1"/>
    <property type="molecule type" value="Genomic_DNA"/>
</dbReference>
<dbReference type="EMBL" id="X58789">
    <property type="protein sequence ID" value="CAA41595.1"/>
    <property type="molecule type" value="Genomic_DNA"/>
</dbReference>
<dbReference type="EMBL" id="Z26877">
    <property type="protein sequence ID" value="CAA81501.1"/>
    <property type="molecule type" value="Genomic_DNA"/>
</dbReference>
<dbReference type="EMBL" id="Z28152">
    <property type="protein sequence ID" value="CAA81994.1"/>
    <property type="molecule type" value="Genomic_DNA"/>
</dbReference>
<dbReference type="EMBL" id="S57976">
    <property type="protein sequence ID" value="AAB26026.1"/>
    <property type="status" value="ALT_TERM"/>
    <property type="molecule type" value="Genomic_DNA"/>
</dbReference>
<dbReference type="EMBL" id="BK006944">
    <property type="protein sequence ID" value="DAA09011.1"/>
    <property type="molecule type" value="Genomic_DNA"/>
</dbReference>
<dbReference type="PIR" id="S00358">
    <property type="entry name" value="PMBYY"/>
</dbReference>
<dbReference type="RefSeq" id="NP_012770.1">
    <property type="nucleotide sequence ID" value="NM_001179718.1"/>
</dbReference>
<dbReference type="PDB" id="1BQ3">
    <property type="method" value="X-ray"/>
    <property type="resolution" value="2.70 A"/>
    <property type="chains" value="A/B/C/D=2-247"/>
</dbReference>
<dbReference type="PDB" id="1BQ4">
    <property type="method" value="X-ray"/>
    <property type="resolution" value="2.50 A"/>
    <property type="chains" value="A/B/C/D=2-247"/>
</dbReference>
<dbReference type="PDB" id="1QHF">
    <property type="method" value="X-ray"/>
    <property type="resolution" value="1.70 A"/>
    <property type="chains" value="A/B=2-241"/>
</dbReference>
<dbReference type="PDB" id="3PGM">
    <property type="method" value="X-ray"/>
    <property type="resolution" value="2.80 A"/>
    <property type="chains" value="A/B=2-247"/>
</dbReference>
<dbReference type="PDB" id="4PGM">
    <property type="method" value="X-ray"/>
    <property type="resolution" value="2.30 A"/>
    <property type="chains" value="A/B/C/D=2-247"/>
</dbReference>
<dbReference type="PDB" id="5PGM">
    <property type="method" value="X-ray"/>
    <property type="resolution" value="2.12 A"/>
    <property type="chains" value="A/B/C/D/E/F/G/H=2-247"/>
</dbReference>
<dbReference type="PDBsum" id="1BQ3"/>
<dbReference type="PDBsum" id="1BQ4"/>
<dbReference type="PDBsum" id="1QHF"/>
<dbReference type="PDBsum" id="3PGM"/>
<dbReference type="PDBsum" id="4PGM"/>
<dbReference type="PDBsum" id="5PGM"/>
<dbReference type="SMR" id="P00950"/>
<dbReference type="BioGRID" id="33985">
    <property type="interactions" value="184"/>
</dbReference>
<dbReference type="DIP" id="DIP-6260N"/>
<dbReference type="FunCoup" id="P00950">
    <property type="interactions" value="1570"/>
</dbReference>
<dbReference type="IntAct" id="P00950">
    <property type="interactions" value="169"/>
</dbReference>
<dbReference type="MINT" id="P00950"/>
<dbReference type="STRING" id="4932.YKL152C"/>
<dbReference type="iPTMnet" id="P00950"/>
<dbReference type="PaxDb" id="4932-YKL152C"/>
<dbReference type="PeptideAtlas" id="P00950"/>
<dbReference type="TopDownProteomics" id="P00950"/>
<dbReference type="EnsemblFungi" id="YKL152C_mRNA">
    <property type="protein sequence ID" value="YKL152C"/>
    <property type="gene ID" value="YKL152C"/>
</dbReference>
<dbReference type="GeneID" id="853705"/>
<dbReference type="KEGG" id="sce:YKL152C"/>
<dbReference type="AGR" id="SGD:S000001635"/>
<dbReference type="SGD" id="S000001635">
    <property type="gene designation" value="GPM1"/>
</dbReference>
<dbReference type="VEuPathDB" id="FungiDB:YKL152C"/>
<dbReference type="eggNOG" id="KOG0235">
    <property type="taxonomic scope" value="Eukaryota"/>
</dbReference>
<dbReference type="GeneTree" id="ENSGT00950000182926"/>
<dbReference type="HOGENOM" id="CLU_033323_1_1_1"/>
<dbReference type="InParanoid" id="P00950"/>
<dbReference type="OMA" id="MLPYWYD"/>
<dbReference type="OrthoDB" id="4818801at2759"/>
<dbReference type="BioCyc" id="MetaCyc:YKL152C-MONOMER"/>
<dbReference type="BioCyc" id="YEAST:YKL152C-MONOMER"/>
<dbReference type="BRENDA" id="5.4.2.11">
    <property type="organism ID" value="984"/>
</dbReference>
<dbReference type="SABIO-RK" id="P00950"/>
<dbReference type="UniPathway" id="UPA00109">
    <property type="reaction ID" value="UER00186"/>
</dbReference>
<dbReference type="BioGRID-ORCS" id="853705">
    <property type="hits" value="7 hits in 10 CRISPR screens"/>
</dbReference>
<dbReference type="CD-CODE" id="E03F929F">
    <property type="entry name" value="Stress granule"/>
</dbReference>
<dbReference type="EvolutionaryTrace" id="P00950"/>
<dbReference type="PRO" id="PR:P00950"/>
<dbReference type="Proteomes" id="UP000002311">
    <property type="component" value="Chromosome XI"/>
</dbReference>
<dbReference type="RNAct" id="P00950">
    <property type="molecule type" value="protein"/>
</dbReference>
<dbReference type="GO" id="GO:0005829">
    <property type="term" value="C:cytosol"/>
    <property type="evidence" value="ECO:0000314"/>
    <property type="project" value="SGD"/>
</dbReference>
<dbReference type="GO" id="GO:0005758">
    <property type="term" value="C:mitochondrial intermembrane space"/>
    <property type="evidence" value="ECO:0000314"/>
    <property type="project" value="SGD"/>
</dbReference>
<dbReference type="GO" id="GO:0005741">
    <property type="term" value="C:mitochondrial outer membrane"/>
    <property type="evidence" value="ECO:0007669"/>
    <property type="project" value="UniProtKB-SubCell"/>
</dbReference>
<dbReference type="GO" id="GO:0005739">
    <property type="term" value="C:mitochondrion"/>
    <property type="evidence" value="ECO:0000314"/>
    <property type="project" value="SGD"/>
</dbReference>
<dbReference type="GO" id="GO:0004619">
    <property type="term" value="F:phosphoglycerate mutase activity"/>
    <property type="evidence" value="ECO:0000314"/>
    <property type="project" value="SGD"/>
</dbReference>
<dbReference type="GO" id="GO:0006094">
    <property type="term" value="P:gluconeogenesis"/>
    <property type="evidence" value="ECO:0000315"/>
    <property type="project" value="SGD"/>
</dbReference>
<dbReference type="GO" id="GO:0006096">
    <property type="term" value="P:glycolytic process"/>
    <property type="evidence" value="ECO:0000315"/>
    <property type="project" value="SGD"/>
</dbReference>
<dbReference type="CDD" id="cd07067">
    <property type="entry name" value="HP_PGM_like"/>
    <property type="match status" value="1"/>
</dbReference>
<dbReference type="FunFam" id="3.40.50.1240:FF:000012">
    <property type="entry name" value="Phosphoglycerate mutase 1"/>
    <property type="match status" value="1"/>
</dbReference>
<dbReference type="Gene3D" id="3.40.50.1240">
    <property type="entry name" value="Phosphoglycerate mutase-like"/>
    <property type="match status" value="1"/>
</dbReference>
<dbReference type="HAMAP" id="MF_01039">
    <property type="entry name" value="PGAM_GpmA"/>
    <property type="match status" value="1"/>
</dbReference>
<dbReference type="InterPro" id="IPR013078">
    <property type="entry name" value="His_Pase_superF_clade-1"/>
</dbReference>
<dbReference type="InterPro" id="IPR029033">
    <property type="entry name" value="His_PPase_superfam"/>
</dbReference>
<dbReference type="InterPro" id="IPR001345">
    <property type="entry name" value="PG/BPGM_mutase_AS"/>
</dbReference>
<dbReference type="InterPro" id="IPR005952">
    <property type="entry name" value="Phosphogly_mut1"/>
</dbReference>
<dbReference type="NCBIfam" id="TIGR01258">
    <property type="entry name" value="pgm_1"/>
    <property type="match status" value="1"/>
</dbReference>
<dbReference type="NCBIfam" id="NF010713">
    <property type="entry name" value="PRK14115.1"/>
    <property type="match status" value="1"/>
</dbReference>
<dbReference type="NCBIfam" id="NF010718">
    <property type="entry name" value="PRK14120.1"/>
    <property type="match status" value="1"/>
</dbReference>
<dbReference type="PANTHER" id="PTHR11931">
    <property type="entry name" value="PHOSPHOGLYCERATE MUTASE"/>
    <property type="match status" value="1"/>
</dbReference>
<dbReference type="Pfam" id="PF00300">
    <property type="entry name" value="His_Phos_1"/>
    <property type="match status" value="1"/>
</dbReference>
<dbReference type="PIRSF" id="PIRSF000709">
    <property type="entry name" value="6PFK_2-Ptase"/>
    <property type="match status" value="1"/>
</dbReference>
<dbReference type="SMART" id="SM00855">
    <property type="entry name" value="PGAM"/>
    <property type="match status" value="1"/>
</dbReference>
<dbReference type="SUPFAM" id="SSF53254">
    <property type="entry name" value="Phosphoglycerate mutase-like"/>
    <property type="match status" value="1"/>
</dbReference>
<dbReference type="PROSITE" id="PS00175">
    <property type="entry name" value="PG_MUTASE"/>
    <property type="match status" value="1"/>
</dbReference>
<accession>P00950</accession>
<accession>D6VX45</accession>
<accession>Q02117</accession>
<protein>
    <recommendedName>
        <fullName>Phosphoglycerate mutase 1</fullName>
        <shortName>PGAM 1</shortName>
        <ecNumber evidence="4">5.4.2.11</ecNumber>
    </recommendedName>
    <alternativeName>
        <fullName>BPG-dependent PGAM 1</fullName>
    </alternativeName>
    <alternativeName>
        <fullName>MPGM 1</fullName>
    </alternativeName>
    <alternativeName>
        <fullName>Phosphoglyceromutase 1</fullName>
    </alternativeName>
</protein>
<feature type="initiator methionine" description="Removed" evidence="13">
    <location>
        <position position="1"/>
    </location>
</feature>
<feature type="chain" id="PRO_0000179839" description="Phosphoglycerate mutase 1">
    <location>
        <begin position="2"/>
        <end position="247"/>
    </location>
</feature>
<feature type="active site" description="Tele-phosphohistidine intermediate" evidence="1 3 10 12">
    <location>
        <position position="9"/>
    </location>
</feature>
<feature type="active site" description="Proton donor/acceptor" evidence="15">
    <location>
        <position position="87"/>
    </location>
</feature>
<feature type="binding site" evidence="2 3 10">
    <location>
        <begin position="8"/>
        <end position="15"/>
    </location>
    <ligand>
        <name>substrate</name>
    </ligand>
</feature>
<feature type="binding site" evidence="2 3">
    <location>
        <begin position="21"/>
        <end position="22"/>
    </location>
    <ligand>
        <name>substrate</name>
    </ligand>
</feature>
<feature type="binding site" evidence="3">
    <location>
        <position position="60"/>
    </location>
    <ligand>
        <name>substrate</name>
    </ligand>
</feature>
<feature type="binding site" evidence="2 10">
    <location>
        <begin position="87"/>
        <end position="90"/>
    </location>
    <ligand>
        <name>substrate</name>
    </ligand>
</feature>
<feature type="binding site" evidence="2">
    <location>
        <position position="98"/>
    </location>
    <ligand>
        <name>substrate</name>
    </ligand>
</feature>
<feature type="binding site" evidence="2">
    <location>
        <begin position="114"/>
        <end position="115"/>
    </location>
    <ligand>
        <name>substrate</name>
    </ligand>
</feature>
<feature type="binding site" evidence="2 10">
    <location>
        <begin position="183"/>
        <end position="184"/>
    </location>
    <ligand>
        <name>substrate</name>
    </ligand>
</feature>
<feature type="site" description="Transition state stabilizer" evidence="15">
    <location>
        <position position="182"/>
    </location>
</feature>
<feature type="modified residue" description="Phosphoserine" evidence="18">
    <location>
        <position position="12"/>
    </location>
</feature>
<feature type="modified residue" description="Phosphotyrosine" evidence="21">
    <location>
        <position position="49"/>
    </location>
</feature>
<feature type="modified residue" description="Phosphoserine" evidence="18 19 20 21">
    <location>
        <position position="116"/>
    </location>
</feature>
<feature type="modified residue" description="Phosphoserine" evidence="20">
    <location>
        <position position="127"/>
    </location>
</feature>
<feature type="modified residue" description="Phosphoserine" evidence="21">
    <location>
        <position position="128"/>
    </location>
</feature>
<feature type="modified residue" description="Phosphoserine" evidence="18">
    <location>
        <position position="185"/>
    </location>
</feature>
<feature type="modified residue" description="Phosphoserine" evidence="20 21">
    <location>
        <position position="197"/>
    </location>
</feature>
<feature type="cross-link" description="Glycyl lysine isopeptide (Lys-Gly) (interchain with G-Cter in ubiquitin)" evidence="22">
    <location>
        <position position="31"/>
    </location>
</feature>
<feature type="cross-link" description="Glycyl lysine isopeptide (Lys-Gly) (interchain with G-Cter in ubiquitin)" evidence="22">
    <location>
        <position position="57"/>
    </location>
</feature>
<feature type="cross-link" description="Glycyl lysine isopeptide (Lys-Gly) (interchain with G-Cter in ubiquitin)" evidence="22">
    <location>
        <position position="71"/>
    </location>
</feature>
<feature type="cross-link" description="Glycyl lysine isopeptide (Lys-Gly) (interchain with G-Cter in ubiquitin)" evidence="22">
    <location>
        <position position="139"/>
    </location>
</feature>
<feature type="cross-link" description="Glycyl lysine isopeptide (Lys-Gly) (interchain with G-Cter in ubiquitin)" evidence="22">
    <location>
        <position position="175"/>
    </location>
</feature>
<feature type="cross-link" description="Glycyl lysine isopeptide (Lys-Gly) (interchain with G-Cter in ubiquitin)" evidence="22">
    <location>
        <position position="191"/>
    </location>
</feature>
<feature type="mutagenesis site" description="Causes dissociation of the homotetramer to dimers at low concentrations." evidence="11">
    <original>K</original>
    <variation>P</variation>
    <location>
        <position position="169"/>
    </location>
</feature>
<feature type="mutagenesis site" description="Reduces kcat of the mutase reaction 10000-fold." evidence="4">
    <original>H</original>
    <variation>A</variation>
    <location>
        <position position="182"/>
    </location>
</feature>
<feature type="strand" evidence="23">
    <location>
        <begin position="3"/>
        <end position="8"/>
    </location>
</feature>
<feature type="helix" evidence="23">
    <location>
        <begin position="13"/>
        <end position="16"/>
    </location>
</feature>
<feature type="helix" evidence="23">
    <location>
        <begin position="30"/>
        <end position="45"/>
    </location>
</feature>
<feature type="strand" evidence="23">
    <location>
        <begin position="51"/>
        <end position="55"/>
    </location>
</feature>
<feature type="helix" evidence="23">
    <location>
        <begin position="59"/>
        <end position="71"/>
    </location>
</feature>
<feature type="strand" evidence="23">
    <location>
        <begin position="79"/>
        <end position="81"/>
    </location>
</feature>
<feature type="helix" evidence="23">
    <location>
        <begin position="83"/>
        <end position="85"/>
    </location>
</feature>
<feature type="helix" evidence="23">
    <location>
        <begin position="91"/>
        <end position="93"/>
    </location>
</feature>
<feature type="helix" evidence="23">
    <location>
        <begin position="98"/>
        <end position="115"/>
    </location>
</feature>
<feature type="strand" evidence="24">
    <location>
        <begin position="116"/>
        <end position="118"/>
    </location>
</feature>
<feature type="strand" evidence="24">
    <location>
        <begin position="126"/>
        <end position="130"/>
    </location>
</feature>
<feature type="helix" evidence="23">
    <location>
        <begin position="136"/>
        <end position="138"/>
    </location>
</feature>
<feature type="helix" evidence="23">
    <location>
        <begin position="143"/>
        <end position="145"/>
    </location>
</feature>
<feature type="helix" evidence="23">
    <location>
        <begin position="152"/>
        <end position="165"/>
    </location>
</feature>
<feature type="helix" evidence="23">
    <location>
        <begin position="167"/>
        <end position="172"/>
    </location>
</feature>
<feature type="strand" evidence="23">
    <location>
        <begin position="177"/>
        <end position="181"/>
    </location>
</feature>
<feature type="helix" evidence="23">
    <location>
        <begin position="183"/>
        <end position="194"/>
    </location>
</feature>
<feature type="turn" evidence="23">
    <location>
        <begin position="198"/>
        <end position="200"/>
    </location>
</feature>
<feature type="helix" evidence="23">
    <location>
        <begin position="201"/>
        <end position="203"/>
    </location>
</feature>
<feature type="strand" evidence="24">
    <location>
        <begin position="208"/>
        <end position="210"/>
    </location>
</feature>
<feature type="strand" evidence="23">
    <location>
        <begin position="212"/>
        <end position="216"/>
    </location>
</feature>
<feature type="turn" evidence="24">
    <location>
        <begin position="218"/>
        <end position="220"/>
    </location>
</feature>
<feature type="strand" evidence="23">
    <location>
        <begin position="222"/>
        <end position="224"/>
    </location>
</feature>
<feature type="strand" evidence="23">
    <location>
        <begin position="227"/>
        <end position="230"/>
    </location>
</feature>
<feature type="turn" evidence="23">
    <location>
        <begin position="231"/>
        <end position="233"/>
    </location>
</feature>
<reference key="1">
    <citation type="journal article" date="1982" name="Proc. R. Soc. Lond., B, Biol. Sci.">
        <title>The amino acid sequence of yeast phosphoglycerate mutase.</title>
        <authorList>
            <person name="Fothergill L.A."/>
            <person name="Harkins R.N."/>
        </authorList>
    </citation>
    <scope>PRELIMINARY PROTEIN SEQUENCE OF 2-247</scope>
</reference>
<reference key="2">
    <citation type="journal article" date="1988" name="FEBS Lett.">
        <title>Sequence of the gene encoding phosphoglycerate mutase from Saccharomyces cerevisiae.</title>
        <authorList>
            <person name="White M.F."/>
            <person name="Fothergill-Gilmore L.A."/>
        </authorList>
    </citation>
    <scope>NUCLEOTIDE SEQUENCE [GENOMIC DNA]</scope>
</reference>
<reference key="3">
    <citation type="journal article" date="1991" name="Curr. Genet.">
        <title>Sequence and localization of the gene encoding yeast phosphoglycerate mutase.</title>
        <authorList>
            <person name="Heinisch J.J."/>
            <person name="von Borstel R.C."/>
            <person name="Rodicio R.M."/>
        </authorList>
    </citation>
    <scope>NUCLEOTIDE SEQUENCE [GENOMIC DNA]</scope>
</reference>
<reference key="4">
    <citation type="journal article" date="1994" name="Yeast">
        <title>DNA sequencing of a 36.2 kb fragment located between the FAS1 and LAP loci of chromosome XI of Saccharomyces cerevisiae.</title>
        <authorList>
            <person name="Vandenbol M."/>
            <person name="Bolle P.-A."/>
            <person name="Dion C."/>
            <person name="Portetelle D."/>
            <person name="Hilger F."/>
        </authorList>
    </citation>
    <scope>NUCLEOTIDE SEQUENCE [GENOMIC DNA]</scope>
    <source>
        <strain>ATCC 204508 / S288c</strain>
    </source>
</reference>
<reference key="5">
    <citation type="journal article" date="1994" name="Nature">
        <title>Complete DNA sequence of yeast chromosome XI.</title>
        <authorList>
            <person name="Dujon B."/>
            <person name="Alexandraki D."/>
            <person name="Andre B."/>
            <person name="Ansorge W."/>
            <person name="Baladron V."/>
            <person name="Ballesta J.P.G."/>
            <person name="Banrevi A."/>
            <person name="Bolle P.-A."/>
            <person name="Bolotin-Fukuhara M."/>
            <person name="Bossier P."/>
            <person name="Bou G."/>
            <person name="Boyer J."/>
            <person name="Buitrago M.J."/>
            <person name="Cheret G."/>
            <person name="Colleaux L."/>
            <person name="Daignan-Fornier B."/>
            <person name="del Rey F."/>
            <person name="Dion C."/>
            <person name="Domdey H."/>
            <person name="Duesterhoeft A."/>
            <person name="Duesterhus S."/>
            <person name="Entian K.-D."/>
            <person name="Erfle H."/>
            <person name="Esteban P.F."/>
            <person name="Feldmann H."/>
            <person name="Fernandes L."/>
            <person name="Fobo G.M."/>
            <person name="Fritz C."/>
            <person name="Fukuhara H."/>
            <person name="Gabel C."/>
            <person name="Gaillon L."/>
            <person name="Garcia-Cantalejo J.M."/>
            <person name="Garcia-Ramirez J.J."/>
            <person name="Gent M.E."/>
            <person name="Ghazvini M."/>
            <person name="Goffeau A."/>
            <person name="Gonzalez A."/>
            <person name="Grothues D."/>
            <person name="Guerreiro P."/>
            <person name="Hegemann J.H."/>
            <person name="Hewitt N."/>
            <person name="Hilger F."/>
            <person name="Hollenberg C.P."/>
            <person name="Horaitis O."/>
            <person name="Indge K.J."/>
            <person name="Jacquier A."/>
            <person name="James C.M."/>
            <person name="Jauniaux J.-C."/>
            <person name="Jimenez A."/>
            <person name="Keuchel H."/>
            <person name="Kirchrath L."/>
            <person name="Kleine K."/>
            <person name="Koetter P."/>
            <person name="Legrain P."/>
            <person name="Liebl S."/>
            <person name="Louis E.J."/>
            <person name="Maia e Silva A."/>
            <person name="Marck C."/>
            <person name="Monnier A.-L."/>
            <person name="Moestl D."/>
            <person name="Mueller S."/>
            <person name="Obermaier B."/>
            <person name="Oliver S.G."/>
            <person name="Pallier C."/>
            <person name="Pascolo S."/>
            <person name="Pfeiffer F."/>
            <person name="Philippsen P."/>
            <person name="Planta R.J."/>
            <person name="Pohl F.M."/>
            <person name="Pohl T.M."/>
            <person name="Poehlmann R."/>
            <person name="Portetelle D."/>
            <person name="Purnelle B."/>
            <person name="Puzos V."/>
            <person name="Ramezani Rad M."/>
            <person name="Rasmussen S.W."/>
            <person name="Remacha M.A."/>
            <person name="Revuelta J.L."/>
            <person name="Richard G.-F."/>
            <person name="Rieger M."/>
            <person name="Rodrigues-Pousada C."/>
            <person name="Rose M."/>
            <person name="Rupp T."/>
            <person name="Santos M.A."/>
            <person name="Schwager C."/>
            <person name="Sensen C."/>
            <person name="Skala J."/>
            <person name="Soares H."/>
            <person name="Sor F."/>
            <person name="Stegemann J."/>
            <person name="Tettelin H."/>
            <person name="Thierry A."/>
            <person name="Tzermia M."/>
            <person name="Urrestarazu L.A."/>
            <person name="van Dyck L."/>
            <person name="van Vliet-Reedijk J.C."/>
            <person name="Valens M."/>
            <person name="Vandenbol M."/>
            <person name="Vilela C."/>
            <person name="Vissers S."/>
            <person name="von Wettstein D."/>
            <person name="Voss H."/>
            <person name="Wiemann S."/>
            <person name="Xu G."/>
            <person name="Zimmermann J."/>
            <person name="Haasemann M."/>
            <person name="Becker I."/>
            <person name="Mewes H.-W."/>
        </authorList>
    </citation>
    <scope>NUCLEOTIDE SEQUENCE [LARGE SCALE GENOMIC DNA]</scope>
    <source>
        <strain>ATCC 204508 / S288c</strain>
    </source>
</reference>
<reference key="6">
    <citation type="journal article" date="2014" name="G3 (Bethesda)">
        <title>The reference genome sequence of Saccharomyces cerevisiae: Then and now.</title>
        <authorList>
            <person name="Engel S.R."/>
            <person name="Dietrich F.S."/>
            <person name="Fisk D.G."/>
            <person name="Binkley G."/>
            <person name="Balakrishnan R."/>
            <person name="Costanzo M.C."/>
            <person name="Dwight S.S."/>
            <person name="Hitz B.C."/>
            <person name="Karra K."/>
            <person name="Nash R.S."/>
            <person name="Weng S."/>
            <person name="Wong E.D."/>
            <person name="Lloyd P."/>
            <person name="Skrzypek M.S."/>
            <person name="Miyasato S.R."/>
            <person name="Simison M."/>
            <person name="Cherry J.M."/>
        </authorList>
    </citation>
    <scope>GENOME REANNOTATION</scope>
    <source>
        <strain>ATCC 204508 / S288c</strain>
    </source>
</reference>
<reference key="7">
    <citation type="journal article" date="1993" name="Gene">
        <title>Transcriptional control of yeast phosphoglycerate mutase-encoding gene.</title>
        <authorList>
            <person name="Rodicio R."/>
            <person name="Heinisch J.J."/>
            <person name="Hollenberg C.P."/>
        </authorList>
    </citation>
    <scope>NUCLEOTIDE SEQUENCE [GENOMIC DNA] OF 1-56</scope>
</reference>
<reference key="8">
    <citation type="submission" date="1996-02" db="UniProtKB">
        <authorList>
            <person name="Frutiger S."/>
            <person name="Hughes G.J."/>
            <person name="Sanchez J.-C."/>
            <person name="Hochstrasser D.F."/>
        </authorList>
    </citation>
    <scope>PROTEIN SEQUENCE OF 2-11</scope>
    <source>
        <strain>ATCC 26786 / X2180-1A</strain>
    </source>
</reference>
<reference key="9">
    <citation type="journal article" date="1997" name="Yeast">
        <title>Two-dimensional electrophoretic separation of yeast proteins using a non-linear wide range (pH 3-10) immobilized pH gradient in the first dimension; reproducibility and evidence for isoelectric focusing of alkaline (pI &gt; 7) proteins.</title>
        <authorList>
            <person name="Norbeck J."/>
            <person name="Blomberg A."/>
        </authorList>
    </citation>
    <scope>PROTEIN SEQUENCE OF 110-114 AND 204-217</scope>
    <source>
        <strain>ATCC 44827 / SKQ2N</strain>
    </source>
</reference>
<reference key="10">
    <citation type="journal article" date="1992" name="Eur. J. Biochem.">
        <title>Development of a mutagenesis, expression and purification system for yeast phosphoglycerate mutase. Investigation of the role of active-site His181.</title>
        <authorList>
            <person name="White M.F."/>
            <person name="Fothergill-Gilmore L.A."/>
        </authorList>
    </citation>
    <scope>FUNCTION</scope>
    <scope>CATALYTIC ACTIVITY</scope>
    <scope>MUTAGENESIS OF HIS-182</scope>
    <scope>BIOPHYSICOCHEMICAL PROPERTIES</scope>
</reference>
<reference key="11">
    <citation type="journal article" date="1993" name="Biochem. J.">
        <title>Dissociation of the tetrameric phosphoglycerate mutase from yeast by a mutation in the subunit contact region.</title>
        <authorList>
            <person name="White M.F."/>
            <person name="Fothergill-Gilmore L.A."/>
            <person name="Kelly S.M."/>
            <person name="Price N.C."/>
        </authorList>
    </citation>
    <scope>FUNCTION</scope>
    <scope>SUBUNIT</scope>
    <scope>MUTAGENESIS OF LYS-169</scope>
    <scope>BIOPHYSICOCHEMICAL PROPERTIES</scope>
</reference>
<reference key="12">
    <citation type="journal article" date="2003" name="Nature">
        <title>Global analysis of protein localization in budding yeast.</title>
        <authorList>
            <person name="Huh W.-K."/>
            <person name="Falvo J.V."/>
            <person name="Gerke L.C."/>
            <person name="Carroll A.S."/>
            <person name="Howson R.W."/>
            <person name="Weissman J.S."/>
            <person name="O'Shea E.K."/>
        </authorList>
    </citation>
    <scope>SUBCELLULAR LOCATION [LARGE SCALE ANALYSIS]</scope>
</reference>
<reference key="13">
    <citation type="journal article" date="2003" name="Nature">
        <title>Global analysis of protein expression in yeast.</title>
        <authorList>
            <person name="Ghaemmaghami S."/>
            <person name="Huh W.-K."/>
            <person name="Bower K."/>
            <person name="Howson R.W."/>
            <person name="Belle A."/>
            <person name="Dephoure N."/>
            <person name="O'Shea E.K."/>
            <person name="Weissman J.S."/>
        </authorList>
    </citation>
    <scope>LEVEL OF PROTEIN EXPRESSION [LARGE SCALE ANALYSIS]</scope>
</reference>
<reference key="14">
    <citation type="journal article" date="2006" name="Biochim. Biophys. Acta">
        <title>Enolase takes part in a macromolecular complex associated to mitochondria in yeast.</title>
        <authorList>
            <person name="Brandina I."/>
            <person name="Graham J."/>
            <person name="Lemaitre-Guillier C."/>
            <person name="Entelis N."/>
            <person name="Krasheninnikov I."/>
            <person name="Sweetlove L."/>
            <person name="Tarassov I."/>
            <person name="Martin R.P."/>
        </authorList>
    </citation>
    <scope>SUBCELLULAR LOCATION</scope>
</reference>
<reference key="15">
    <citation type="journal article" date="2006" name="J. Proteome Res.">
        <title>Toward the complete yeast mitochondrial proteome: multidimensional separation techniques for mitochondrial proteomics.</title>
        <authorList>
            <person name="Reinders J."/>
            <person name="Zahedi R.P."/>
            <person name="Pfanner N."/>
            <person name="Meisinger C."/>
            <person name="Sickmann A."/>
        </authorList>
    </citation>
    <scope>SUBCELLULAR LOCATION [LARGE SCALE ANALYSIS]</scope>
    <scope>IDENTIFICATION BY MASS SPECTROMETRY</scope>
</reference>
<reference key="16">
    <citation type="journal article" date="2007" name="J. Proteome Res.">
        <title>Large-scale phosphorylation analysis of alpha-factor-arrested Saccharomyces cerevisiae.</title>
        <authorList>
            <person name="Li X."/>
            <person name="Gerber S.A."/>
            <person name="Rudner A.D."/>
            <person name="Beausoleil S.A."/>
            <person name="Haas W."/>
            <person name="Villen J."/>
            <person name="Elias J.E."/>
            <person name="Gygi S.P."/>
        </authorList>
    </citation>
    <scope>PHOSPHORYLATION [LARGE SCALE ANALYSIS] AT SER-116</scope>
    <scope>IDENTIFICATION BY MASS SPECTROMETRY [LARGE SCALE ANALYSIS]</scope>
    <source>
        <strain>ADR376</strain>
    </source>
</reference>
<reference key="17">
    <citation type="journal article" date="2007" name="Proc. Natl. Acad. Sci. U.S.A.">
        <title>Analysis of phosphorylation sites on proteins from Saccharomyces cerevisiae by electron transfer dissociation (ETD) mass spectrometry.</title>
        <authorList>
            <person name="Chi A."/>
            <person name="Huttenhower C."/>
            <person name="Geer L.Y."/>
            <person name="Coon J.J."/>
            <person name="Syka J.E.P."/>
            <person name="Bai D.L."/>
            <person name="Shabanowitz J."/>
            <person name="Burke D.J."/>
            <person name="Troyanskaya O.G."/>
            <person name="Hunt D.F."/>
        </authorList>
    </citation>
    <scope>PHOSPHORYLATION [LARGE SCALE ANALYSIS] AT SER-12; SER-116 AND SER-185</scope>
    <scope>IDENTIFICATION BY MASS SPECTROMETRY [LARGE SCALE ANALYSIS]</scope>
</reference>
<reference key="18">
    <citation type="journal article" date="2008" name="Mol. Cell. Proteomics">
        <title>A multidimensional chromatography technology for in-depth phosphoproteome analysis.</title>
        <authorList>
            <person name="Albuquerque C.P."/>
            <person name="Smolka M.B."/>
            <person name="Payne S.H."/>
            <person name="Bafna V."/>
            <person name="Eng J."/>
            <person name="Zhou H."/>
        </authorList>
    </citation>
    <scope>PHOSPHORYLATION [LARGE SCALE ANALYSIS] AT SER-116; SER-127 AND SER-197</scope>
    <scope>IDENTIFICATION BY MASS SPECTROMETRY [LARGE SCALE ANALYSIS]</scope>
</reference>
<reference key="19">
    <citation type="journal article" date="2009" name="Science">
        <title>Global analysis of Cdk1 substrate phosphorylation sites provides insights into evolution.</title>
        <authorList>
            <person name="Holt L.J."/>
            <person name="Tuch B.B."/>
            <person name="Villen J."/>
            <person name="Johnson A.D."/>
            <person name="Gygi S.P."/>
            <person name="Morgan D.O."/>
        </authorList>
    </citation>
    <scope>PHOSPHORYLATION [LARGE SCALE ANALYSIS] AT TYR-49; SER-116; SER-128 AND SER-197</scope>
    <scope>IDENTIFICATION BY MASS SPECTROMETRY [LARGE SCALE ANALYSIS]</scope>
</reference>
<reference key="20">
    <citation type="journal article" date="2012" name="Mol. Cell. Proteomics">
        <title>Intermembrane space proteome of yeast mitochondria.</title>
        <authorList>
            <person name="Voegtle F.N."/>
            <person name="Burkhart J.M."/>
            <person name="Rao S."/>
            <person name="Gerbeth C."/>
            <person name="Hinrichs J."/>
            <person name="Martinou J.C."/>
            <person name="Chacinska A."/>
            <person name="Sickmann A."/>
            <person name="Zahedi R.P."/>
            <person name="Meisinger C."/>
        </authorList>
    </citation>
    <scope>IDENTIFICATION BY MASS SPECTROMETRY</scope>
    <scope>SUBCELLULAR LOCATION [LARGE SCALE ANALYSIS]</scope>
</reference>
<reference key="21">
    <citation type="journal article" date="2012" name="Proc. Natl. Acad. Sci. U.S.A.">
        <title>N-terminal acetylome analyses and functional insights of the N-terminal acetyltransferase NatB.</title>
        <authorList>
            <person name="Van Damme P."/>
            <person name="Lasa M."/>
            <person name="Polevoda B."/>
            <person name="Gazquez C."/>
            <person name="Elosegui-Artola A."/>
            <person name="Kim D.S."/>
            <person name="De Juan-Pardo E."/>
            <person name="Demeyer K."/>
            <person name="Hole K."/>
            <person name="Larrea E."/>
            <person name="Timmerman E."/>
            <person name="Prieto J."/>
            <person name="Arnesen T."/>
            <person name="Sherman F."/>
            <person name="Gevaert K."/>
            <person name="Aldabe R."/>
        </authorList>
    </citation>
    <scope>IDENTIFICATION BY MASS SPECTROMETRY [LARGE SCALE ANALYSIS]</scope>
</reference>
<reference key="22">
    <citation type="journal article" date="2012" name="Proteomics">
        <title>Sites of ubiquitin attachment in Saccharomyces cerevisiae.</title>
        <authorList>
            <person name="Starita L.M."/>
            <person name="Lo R.S."/>
            <person name="Eng J.K."/>
            <person name="von Haller P.D."/>
            <person name="Fields S."/>
        </authorList>
    </citation>
    <scope>UBIQUITINATION [LARGE SCALE ANALYSIS] AT LYS-31; LYS-57; LYS-71; LYS-139; LYS-175 AND LYS-191</scope>
    <scope>IDENTIFICATION BY MASS SPECTROMETRY [LARGE SCALE ANALYSIS]</scope>
</reference>
<reference key="23">
    <citation type="journal article" date="1981" name="Philos. Trans. R. Soc. Lond., B, Biol. Sci.">
        <title>Structure and activity of phosphoglycerate mutase.</title>
        <authorList>
            <person name="Winn S.I."/>
            <person name="Watson H.C."/>
            <person name="Harkins R.N."/>
            <person name="Fothergill L.A."/>
        </authorList>
    </citation>
    <scope>X-RAY CRYSTALLOGRAPHY (2.8 ANGSTROMS) IN COMPLEX WITH 3-PHOSPHO-D-GLYCERATE</scope>
    <scope>SUBUNIT</scope>
    <scope>REACTION MECHANISM</scope>
</reference>
<reference key="24">
    <citation type="journal article" date="1998" name="J. Mol. Biol.">
        <title>The 2.3 A X-ray crystal structure of S. cerevisiae phosphoglycerate mutase.</title>
        <authorList>
            <person name="Rigden D.J."/>
            <person name="Alexeev D."/>
            <person name="Phillips S.E.V.P."/>
            <person name="Fothergill-Gilmore L.A."/>
        </authorList>
    </citation>
    <scope>X-RAY CRYSTALLOGRAPHY (2.3 ANGSTROMS)</scope>
    <scope>SUBUNIT</scope>
</reference>
<reference key="25">
    <citation type="journal article" date="1999" name="Acta Crystallogr. D">
        <title>Structure of a phosphoglycerate mutase:3-phosphoglyceric acid complex at 1.7 A.</title>
        <authorList>
            <person name="Crowhurst G.S."/>
            <person name="Dalby A.R."/>
            <person name="Isupov M.N."/>
            <person name="Campbell J.W."/>
            <person name="Littlechild J.A."/>
        </authorList>
    </citation>
    <scope>X-RAY CRYSTALLOGRAPHY (1.70 ANGSTROMS) IN COMPLEX WITH 3-PHOSPHO-D-GLYCERATE</scope>
    <scope>SUBUNIT</scope>
    <scope>ACTIVE SITE</scope>
</reference>
<reference key="26">
    <citation type="journal article" date="1999" name="J. Mol. Biol.">
        <title>Sulphate ions observed in the 2.12 A structure of a new crystal form of S. cerevisiae phosphoglycerate mutase provide insights into understanding the catalytic mechanism.</title>
        <authorList>
            <person name="Rigden D.J."/>
            <person name="Walter R.A."/>
            <person name="Phillips S.E."/>
            <person name="Fothergill-Gilmore L.A."/>
        </authorList>
    </citation>
    <scope>X-RAY CRYSTALLOGRAPHY (2.12 ANGSTROMS) IN COMPLEX WITH SUBSTRATE ANALOGS</scope>
    <scope>SUBUNIT</scope>
    <scope>ACTIVE SITE</scope>
</reference>
<reference evidence="16 17" key="27">
    <citation type="journal article" date="1999" name="J. Mol. Biol.">
        <title>Polyanionic inhibitors of phosphoglycerate mutase: combined structural and biochemical analysis.</title>
        <authorList>
            <person name="Rigden D.J."/>
            <person name="Walter R.A."/>
            <person name="Phillips S.E."/>
            <person name="Fothergill-Gilmore L.A."/>
        </authorList>
    </citation>
    <scope>X-RAY CRYSTALLOGRAPHY (2.50 ANGSTROMS) IN COMPLEX WITH SUBSTRATE ANALOGS</scope>
    <scope>ACTIVITY REGULATION</scope>
    <scope>SUBUNIT</scope>
</reference>
<evidence type="ECO:0000269" key="1">
    <source>
    </source>
</evidence>
<evidence type="ECO:0000269" key="2">
    <source>
    </source>
</evidence>
<evidence type="ECO:0000269" key="3">
    <source>
    </source>
</evidence>
<evidence type="ECO:0000269" key="4">
    <source>
    </source>
</evidence>
<evidence type="ECO:0000269" key="5">
    <source>
    </source>
</evidence>
<evidence type="ECO:0000269" key="6">
    <source>
    </source>
</evidence>
<evidence type="ECO:0000269" key="7">
    <source>
    </source>
</evidence>
<evidence type="ECO:0000269" key="8">
    <source>
    </source>
</evidence>
<evidence type="ECO:0000269" key="9">
    <source>
    </source>
</evidence>
<evidence type="ECO:0000269" key="10">
    <source>
    </source>
</evidence>
<evidence type="ECO:0000269" key="11">
    <source>
    </source>
</evidence>
<evidence type="ECO:0000269" key="12">
    <source>
    </source>
</evidence>
<evidence type="ECO:0000269" key="13">
    <source ref="8"/>
</evidence>
<evidence type="ECO:0000305" key="14"/>
<evidence type="ECO:0000305" key="15">
    <source>
    </source>
</evidence>
<evidence type="ECO:0007744" key="16">
    <source>
        <dbReference type="PDB" id="1BQ3"/>
    </source>
</evidence>
<evidence type="ECO:0007744" key="17">
    <source>
        <dbReference type="PDB" id="1BQ4"/>
    </source>
</evidence>
<evidence type="ECO:0007744" key="18">
    <source>
    </source>
</evidence>
<evidence type="ECO:0007744" key="19">
    <source>
    </source>
</evidence>
<evidence type="ECO:0007744" key="20">
    <source>
    </source>
</evidence>
<evidence type="ECO:0007744" key="21">
    <source>
    </source>
</evidence>
<evidence type="ECO:0007744" key="22">
    <source>
    </source>
</evidence>
<evidence type="ECO:0007829" key="23">
    <source>
        <dbReference type="PDB" id="1QHF"/>
    </source>
</evidence>
<evidence type="ECO:0007829" key="24">
    <source>
        <dbReference type="PDB" id="3PGM"/>
    </source>
</evidence>
<keyword id="KW-0002">3D-structure</keyword>
<keyword id="KW-0963">Cytoplasm</keyword>
<keyword id="KW-0903">Direct protein sequencing</keyword>
<keyword id="KW-0324">Glycolysis</keyword>
<keyword id="KW-0413">Isomerase</keyword>
<keyword id="KW-1017">Isopeptide bond</keyword>
<keyword id="KW-0472">Membrane</keyword>
<keyword id="KW-0496">Mitochondrion</keyword>
<keyword id="KW-1000">Mitochondrion outer membrane</keyword>
<keyword id="KW-0597">Phosphoprotein</keyword>
<keyword id="KW-1185">Reference proteome</keyword>
<keyword id="KW-0832">Ubl conjugation</keyword>